<gene>
    <name type="primary">VPS35</name>
</gene>
<proteinExistence type="evidence at transcript level"/>
<comment type="function">
    <text evidence="1">Acts as a component of the retromer cargo-selective complex (CSC). The CSC is believed to be the core functional component of retromer or respective retromer complex variants acting to prevent missorting of selected transmembrane cargo proteins into the lysosomal degradation pathway. The recruitment of the CSC to the endosomal membrane involves RAB7A and SNX3. The CSC seems to associate with the cytoplasmic domain of cargo proteins predominantly via VPS35; however, these interactions seem to be of low affinity and retromer SNX proteins may also contribute to cargo selectivity thus questioning the classical function of the CSC. The SNX-BAR retromer mediates retrograde transport of cargo proteins from endosomes to the trans-Golgi network (TGN) and is involved in endosome-to-plasma membrane transport for cargo protein recycling. The SNX3-retromer mediates the retrograde endosome-to-TGN transport of WLS distinct from the SNX-BAR retromer pathway. The SNX27-retromer is believed to be involved in endosome-to-plasma membrane trafficking and recycling of a broad spectrum of cargo proteins. The CSC seems to act as recruitment hub for other proteins, such as the WASH complex and TBC1D5. Required for retrograde transport of lysosomal enzyme receptor IGF2R and SLC11A2. Required to regulate transcytosis of the polymeric immunoglobulin receptor (pIgR-pIgA). Required for endosomal localization of WASHC2. Mediates the association of the CSC with the WASH complex via WASHC2. Required for the endosomal localization of TBC1D5 (By similarity).</text>
</comment>
<comment type="subunit">
    <text evidence="1 2">Component of the heterotrimeric retromer cargo-selective complex (CSC), also described as vacuolar protein sorting subcomplex (VPS) formed by VPS26 (VPS26A or VPS26B), VPS29 and VPS35. The CSC has a highly elongated structure with VPS26 and VPS29 binding independently at opposite distal ends of VPS35 as central platform. The CSC is believed to associate with variable sorting nexins to form functionally distinct retromer complex variants. The originally described retromer complex (also called SNX-BAR retromer) is a pentamer containing the CSC and a heterodimeric membrane-deforming subcomplex formed between SNX1 or SNX2 and SNX5 or SNX6 (also called SNX-BAR subcomplex); the affinity between the respective CSC and SNX-BAR subcomplexes is low. The CSC associates with SNX3 to form a SNX3-retromer complex. The CSC associates with SNX27, the WASH complex and the SNX-BAR subcomplex to form the SNX27-retromer complex. Interacts with VPS26A, VPS29, VPS26B and LRRK2 (By similarity). Interacts with SNX1, SNX2, IGF2R, SNX3, GOLPH3, SLC11A2, WASHC2, FKBP15, WASHC1, EHD1. Interacts with MAGEL2; leading to recruitment of the TRIM27:MAGEL2 E3 ubiquitin ligase complex retromer-containing endosomes (By similarity). Interacts with SORCS2 (By similarity).</text>
</comment>
<comment type="subcellular location">
    <subcellularLocation>
        <location>Cytoplasm</location>
    </subcellularLocation>
    <subcellularLocation>
        <location>Membrane</location>
        <topology>Peripheral membrane protein</topology>
    </subcellularLocation>
    <subcellularLocation>
        <location evidence="1">Endosome</location>
    </subcellularLocation>
    <subcellularLocation>
        <location evidence="3">Early endosome</location>
    </subcellularLocation>
    <subcellularLocation>
        <location evidence="3">Late endosome</location>
    </subcellularLocation>
    <text evidence="1">Localizes to tubular profiles adjacent to endosomes.</text>
</comment>
<comment type="similarity">
    <text evidence="3">Belongs to the VPS35 family.</text>
</comment>
<sequence length="796" mass="91751">MPTTQQSPQDEQEKLLDEAIQAVKVQSFQMKRCLDKNKLMDALKHASNMLGELRTSMLSPKSYYELYMAISDELHYLEVYLTDEFAKGRKVADLYELVQYAGNIIPRLYLLITVGVVYVKSFPQSRKDILKDLVEMCRGVQHPLRGLFLRNYLLQCTRNILPDEGEPTDEETTGDISDSMDFVLLNFAEMNKLWVRMQHQGHSRDREKRERERQELRILVGTNLVRLSQLEGVNVERYKQIVLTGILEQVVNCRDALAQEYLMECIIQVFPDEFHLQTLNPFLRACAELHQNVNVKNIIIALIDRLALFAHREDGPGIPTDIKLFDIFSQQVATVIQSRQDMPSEDVVSLQVSLINLAMKCYPDRVDYVDKVLETTVEIFNKLNLEHIATSSAVSKELTRLLKIPVDTYNNILTVLKLKHFHPLFEYFDYESRKSMSCYVLSNVLDYNTEIVSQDQVDSIMNLVSTLIQDQPDQPVEEPDPEDFADEQSLVGRFIHLLRSEDPDQQYLILNTARKHFGAGGNQRIRFTLPPLVFAAYQLAFRYKENSKVDDKWEKKCQKIFSFAHQTISALIKAELAELPLRLFLQGALAAGEIGFENHETVAYEFMSQAFSLYEDEISDSKAQLAAITLIIGTFERMKCFSEENHEPLRTQCALAASKLLKKPDQGRAVSTCAHLFWSGRNTDKNGEELHGGKRVMECLKKALKIANQCMDPSLQVQLFIEILNRYIYFYEKENDAVTIQVLNQLIQKIREDLPNLESSEETEQINKHFHNTLEHLRLRRESPESEGPIYEGLIL</sequence>
<name>VPS35_BOVIN</name>
<organism>
    <name type="scientific">Bos taurus</name>
    <name type="common">Bovine</name>
    <dbReference type="NCBI Taxonomy" id="9913"/>
    <lineage>
        <taxon>Eukaryota</taxon>
        <taxon>Metazoa</taxon>
        <taxon>Chordata</taxon>
        <taxon>Craniata</taxon>
        <taxon>Vertebrata</taxon>
        <taxon>Euteleostomi</taxon>
        <taxon>Mammalia</taxon>
        <taxon>Eutheria</taxon>
        <taxon>Laurasiatheria</taxon>
        <taxon>Artiodactyla</taxon>
        <taxon>Ruminantia</taxon>
        <taxon>Pecora</taxon>
        <taxon>Bovidae</taxon>
        <taxon>Bovinae</taxon>
        <taxon>Bos</taxon>
    </lineage>
</organism>
<keyword id="KW-0963">Cytoplasm</keyword>
<keyword id="KW-0967">Endosome</keyword>
<keyword id="KW-0472">Membrane</keyword>
<keyword id="KW-0597">Phosphoprotein</keyword>
<keyword id="KW-0653">Protein transport</keyword>
<keyword id="KW-1185">Reference proteome</keyword>
<keyword id="KW-0813">Transport</keyword>
<evidence type="ECO:0000250" key="1">
    <source>
        <dbReference type="UniProtKB" id="Q96QK1"/>
    </source>
</evidence>
<evidence type="ECO:0000250" key="2">
    <source>
        <dbReference type="UniProtKB" id="Q9EQH3"/>
    </source>
</evidence>
<evidence type="ECO:0000305" key="3"/>
<feature type="chain" id="PRO_0000253039" description="Vacuolar protein sorting-associated protein 35">
    <location>
        <begin position="1"/>
        <end position="796"/>
    </location>
</feature>
<feature type="region of interest" description="Interaction with SNX3" evidence="1">
    <location>
        <begin position="25"/>
        <end position="44"/>
    </location>
</feature>
<feature type="region of interest" description="Interaction with SNX3" evidence="1">
    <location>
        <begin position="205"/>
        <end position="215"/>
    </location>
</feature>
<feature type="region of interest" description="Interaction with SLC11A2" evidence="1">
    <location>
        <begin position="438"/>
        <end position="796"/>
    </location>
</feature>
<feature type="region of interest" description="Interaction with IGF2R cytoplasmic domain" evidence="1">
    <location>
        <begin position="500"/>
        <end position="693"/>
    </location>
</feature>
<feature type="modified residue" description="Phosphoserine" evidence="1">
    <location>
        <position position="7"/>
    </location>
</feature>
<feature type="modified residue" description="Phosphoserine" evidence="2">
    <location>
        <position position="783"/>
    </location>
</feature>
<feature type="modified residue" description="Phosphotyrosine" evidence="2">
    <location>
        <position position="791"/>
    </location>
</feature>
<accession>Q2HJG5</accession>
<protein>
    <recommendedName>
        <fullName>Vacuolar protein sorting-associated protein 35</fullName>
    </recommendedName>
    <alternativeName>
        <fullName>Vesicle protein sorting 35</fullName>
    </alternativeName>
</protein>
<dbReference type="EMBL" id="BC105430">
    <property type="protein sequence ID" value="AAI05431.1"/>
    <property type="molecule type" value="mRNA"/>
</dbReference>
<dbReference type="RefSeq" id="NP_001039723.1">
    <property type="nucleotide sequence ID" value="NM_001046258.1"/>
</dbReference>
<dbReference type="SMR" id="Q2HJG5"/>
<dbReference type="FunCoup" id="Q2HJG5">
    <property type="interactions" value="4953"/>
</dbReference>
<dbReference type="STRING" id="9913.ENSBTAP00000003239"/>
<dbReference type="PaxDb" id="9913-ENSBTAP00000003239"/>
<dbReference type="PeptideAtlas" id="Q2HJG5"/>
<dbReference type="Ensembl" id="ENSBTAT00000003239.3">
    <property type="protein sequence ID" value="ENSBTAP00000003239.2"/>
    <property type="gene ID" value="ENSBTAG00000002493.3"/>
</dbReference>
<dbReference type="GeneID" id="521864"/>
<dbReference type="KEGG" id="bta:521864"/>
<dbReference type="CTD" id="55737"/>
<dbReference type="VEuPathDB" id="HostDB:ENSBTAG00000002493"/>
<dbReference type="VGNC" id="VGNC:36818">
    <property type="gene designation" value="VPS35"/>
</dbReference>
<dbReference type="eggNOG" id="KOG1107">
    <property type="taxonomic scope" value="Eukaryota"/>
</dbReference>
<dbReference type="GeneTree" id="ENSGT00390000007315"/>
<dbReference type="HOGENOM" id="CLU_005836_1_0_1"/>
<dbReference type="InParanoid" id="Q2HJG5"/>
<dbReference type="OMA" id="YIRSREY"/>
<dbReference type="OrthoDB" id="10258141at2759"/>
<dbReference type="TreeFam" id="TF105659"/>
<dbReference type="Reactome" id="R-BTA-3238698">
    <property type="pathway name" value="WNT ligand biogenesis and trafficking"/>
</dbReference>
<dbReference type="Proteomes" id="UP000009136">
    <property type="component" value="Chromosome 18"/>
</dbReference>
<dbReference type="Bgee" id="ENSBTAG00000002493">
    <property type="expression patterns" value="Expressed in milk and 106 other cell types or tissues"/>
</dbReference>
<dbReference type="GO" id="GO:0005829">
    <property type="term" value="C:cytosol"/>
    <property type="evidence" value="ECO:0007669"/>
    <property type="project" value="Ensembl"/>
</dbReference>
<dbReference type="GO" id="GO:0005769">
    <property type="term" value="C:early endosome"/>
    <property type="evidence" value="ECO:0007669"/>
    <property type="project" value="UniProtKB-SubCell"/>
</dbReference>
<dbReference type="GO" id="GO:0005768">
    <property type="term" value="C:endosome"/>
    <property type="evidence" value="ECO:0000250"/>
    <property type="project" value="UniProtKB"/>
</dbReference>
<dbReference type="GO" id="GO:0010008">
    <property type="term" value="C:endosome membrane"/>
    <property type="evidence" value="ECO:0007669"/>
    <property type="project" value="Ensembl"/>
</dbReference>
<dbReference type="GO" id="GO:0005770">
    <property type="term" value="C:late endosome"/>
    <property type="evidence" value="ECO:0000318"/>
    <property type="project" value="GO_Central"/>
</dbReference>
<dbReference type="GO" id="GO:0005764">
    <property type="term" value="C:lysosome"/>
    <property type="evidence" value="ECO:0007669"/>
    <property type="project" value="Ensembl"/>
</dbReference>
<dbReference type="GO" id="GO:0005739">
    <property type="term" value="C:mitochondrion"/>
    <property type="evidence" value="ECO:0007669"/>
    <property type="project" value="Ensembl"/>
</dbReference>
<dbReference type="GO" id="GO:0099073">
    <property type="term" value="C:mitochondrion-derived vesicle"/>
    <property type="evidence" value="ECO:0007669"/>
    <property type="project" value="Ensembl"/>
</dbReference>
<dbReference type="GO" id="GO:0030904">
    <property type="term" value="C:retromer complex"/>
    <property type="evidence" value="ECO:0000250"/>
    <property type="project" value="UniProtKB"/>
</dbReference>
<dbReference type="GO" id="GO:0030906">
    <property type="term" value="C:retromer, cargo-selective complex"/>
    <property type="evidence" value="ECO:0007669"/>
    <property type="project" value="Ensembl"/>
</dbReference>
<dbReference type="GO" id="GO:0097422">
    <property type="term" value="C:tubular endosome"/>
    <property type="evidence" value="ECO:0000250"/>
    <property type="project" value="UniProtKB"/>
</dbReference>
<dbReference type="GO" id="GO:0031748">
    <property type="term" value="F:D1 dopamine receptor binding"/>
    <property type="evidence" value="ECO:0007669"/>
    <property type="project" value="Ensembl"/>
</dbReference>
<dbReference type="GO" id="GO:0032456">
    <property type="term" value="P:endocytic recycling"/>
    <property type="evidence" value="ECO:0000250"/>
    <property type="project" value="UniProtKB"/>
</dbReference>
<dbReference type="GO" id="GO:0006886">
    <property type="term" value="P:intracellular protein transport"/>
    <property type="evidence" value="ECO:0000318"/>
    <property type="project" value="GO_Central"/>
</dbReference>
<dbReference type="GO" id="GO:0043653">
    <property type="term" value="P:mitochondrial fragmentation involved in apoptotic process"/>
    <property type="evidence" value="ECO:0007669"/>
    <property type="project" value="Ensembl"/>
</dbReference>
<dbReference type="GO" id="GO:0099074">
    <property type="term" value="P:mitochondrion to lysosome vesicle-mediated transport"/>
    <property type="evidence" value="ECO:0007669"/>
    <property type="project" value="Ensembl"/>
</dbReference>
<dbReference type="GO" id="GO:0050728">
    <property type="term" value="P:negative regulation of inflammatory response"/>
    <property type="evidence" value="ECO:0007669"/>
    <property type="project" value="Ensembl"/>
</dbReference>
<dbReference type="GO" id="GO:1902823">
    <property type="term" value="P:negative regulation of late endosome to lysosome transport"/>
    <property type="evidence" value="ECO:0007669"/>
    <property type="project" value="Ensembl"/>
</dbReference>
<dbReference type="GO" id="GO:0099639">
    <property type="term" value="P:neurotransmitter receptor transport, endosome to plasma membrane"/>
    <property type="evidence" value="ECO:0007669"/>
    <property type="project" value="Ensembl"/>
</dbReference>
<dbReference type="GO" id="GO:0060161">
    <property type="term" value="P:positive regulation of dopamine receptor signaling pathway"/>
    <property type="evidence" value="ECO:0007669"/>
    <property type="project" value="Ensembl"/>
</dbReference>
<dbReference type="GO" id="GO:0010628">
    <property type="term" value="P:positive regulation of gene expression"/>
    <property type="evidence" value="ECO:0007669"/>
    <property type="project" value="Ensembl"/>
</dbReference>
<dbReference type="GO" id="GO:0090141">
    <property type="term" value="P:positive regulation of mitochondrial fission"/>
    <property type="evidence" value="ECO:0007669"/>
    <property type="project" value="Ensembl"/>
</dbReference>
<dbReference type="GO" id="GO:0045732">
    <property type="term" value="P:positive regulation of protein catabolic process"/>
    <property type="evidence" value="ECO:0007669"/>
    <property type="project" value="Ensembl"/>
</dbReference>
<dbReference type="GO" id="GO:1904377">
    <property type="term" value="P:positive regulation of protein localization to cell periphery"/>
    <property type="evidence" value="ECO:0007669"/>
    <property type="project" value="Ensembl"/>
</dbReference>
<dbReference type="GO" id="GO:0036010">
    <property type="term" value="P:protein localization to endosome"/>
    <property type="evidence" value="ECO:0000250"/>
    <property type="project" value="UniProtKB"/>
</dbReference>
<dbReference type="GO" id="GO:1902950">
    <property type="term" value="P:regulation of dendritic spine maintenance"/>
    <property type="evidence" value="ECO:0007669"/>
    <property type="project" value="Ensembl"/>
</dbReference>
<dbReference type="GO" id="GO:0031647">
    <property type="term" value="P:regulation of protein stability"/>
    <property type="evidence" value="ECO:0007669"/>
    <property type="project" value="Ensembl"/>
</dbReference>
<dbReference type="GO" id="GO:2000331">
    <property type="term" value="P:regulation of terminal button organization"/>
    <property type="evidence" value="ECO:0007669"/>
    <property type="project" value="Ensembl"/>
</dbReference>
<dbReference type="GO" id="GO:0042147">
    <property type="term" value="P:retrograde transport, endosome to Golgi"/>
    <property type="evidence" value="ECO:0000250"/>
    <property type="project" value="UniProtKB"/>
</dbReference>
<dbReference type="GO" id="GO:0045056">
    <property type="term" value="P:transcytosis"/>
    <property type="evidence" value="ECO:0000250"/>
    <property type="project" value="UniProtKB"/>
</dbReference>
<dbReference type="FunFam" id="1.25.40.660:FF:000001">
    <property type="entry name" value="Vacuolar protein sorting-associated protein 35"/>
    <property type="match status" value="1"/>
</dbReference>
<dbReference type="Gene3D" id="1.25.40.660">
    <property type="entry name" value="Vacuolar protein sorting-associated protein 35, helical subcomplex Vps35-C"/>
    <property type="match status" value="1"/>
</dbReference>
<dbReference type="InterPro" id="IPR016024">
    <property type="entry name" value="ARM-type_fold"/>
</dbReference>
<dbReference type="InterPro" id="IPR005378">
    <property type="entry name" value="Vps35"/>
</dbReference>
<dbReference type="InterPro" id="IPR042491">
    <property type="entry name" value="Vps35_C"/>
</dbReference>
<dbReference type="PANTHER" id="PTHR11099:SF0">
    <property type="entry name" value="VACUOLAR PROTEIN SORTING-ASSOCIATED PROTEIN 35"/>
    <property type="match status" value="1"/>
</dbReference>
<dbReference type="PANTHER" id="PTHR11099">
    <property type="entry name" value="VACUOLAR SORTING PROTEIN 35"/>
    <property type="match status" value="1"/>
</dbReference>
<dbReference type="Pfam" id="PF03635">
    <property type="entry name" value="Vps35"/>
    <property type="match status" value="1"/>
</dbReference>
<dbReference type="PIRSF" id="PIRSF009375">
    <property type="entry name" value="Retromer_Vps35"/>
    <property type="match status" value="1"/>
</dbReference>
<dbReference type="SUPFAM" id="SSF48371">
    <property type="entry name" value="ARM repeat"/>
    <property type="match status" value="1"/>
</dbReference>
<reference key="1">
    <citation type="submission" date="2005-09" db="EMBL/GenBank/DDBJ databases">
        <authorList>
            <consortium name="NIH - Mammalian Gene Collection (MGC) project"/>
        </authorList>
    </citation>
    <scope>NUCLEOTIDE SEQUENCE [LARGE SCALE MRNA]</scope>
    <source>
        <strain>Hereford</strain>
        <tissue>Hypothalamus</tissue>
    </source>
</reference>